<dbReference type="EC" id="2.4.2.7" evidence="1"/>
<dbReference type="EMBL" id="CP000750">
    <property type="protein sequence ID" value="ABS04513.1"/>
    <property type="molecule type" value="Genomic_DNA"/>
</dbReference>
<dbReference type="RefSeq" id="WP_012087236.1">
    <property type="nucleotide sequence ID" value="NC_009664.2"/>
</dbReference>
<dbReference type="SMR" id="A6WCH4"/>
<dbReference type="STRING" id="266940.Krad_3049"/>
<dbReference type="KEGG" id="kra:Krad_3049"/>
<dbReference type="eggNOG" id="COG0503">
    <property type="taxonomic scope" value="Bacteria"/>
</dbReference>
<dbReference type="HOGENOM" id="CLU_063339_3_3_11"/>
<dbReference type="OrthoDB" id="9803963at2"/>
<dbReference type="UniPathway" id="UPA00588">
    <property type="reaction ID" value="UER00646"/>
</dbReference>
<dbReference type="Proteomes" id="UP000001116">
    <property type="component" value="Chromosome"/>
</dbReference>
<dbReference type="GO" id="GO:0005737">
    <property type="term" value="C:cytoplasm"/>
    <property type="evidence" value="ECO:0007669"/>
    <property type="project" value="UniProtKB-SubCell"/>
</dbReference>
<dbReference type="GO" id="GO:0002055">
    <property type="term" value="F:adenine binding"/>
    <property type="evidence" value="ECO:0007669"/>
    <property type="project" value="TreeGrafter"/>
</dbReference>
<dbReference type="GO" id="GO:0003999">
    <property type="term" value="F:adenine phosphoribosyltransferase activity"/>
    <property type="evidence" value="ECO:0007669"/>
    <property type="project" value="UniProtKB-UniRule"/>
</dbReference>
<dbReference type="GO" id="GO:0016208">
    <property type="term" value="F:AMP binding"/>
    <property type="evidence" value="ECO:0007669"/>
    <property type="project" value="TreeGrafter"/>
</dbReference>
<dbReference type="GO" id="GO:0006168">
    <property type="term" value="P:adenine salvage"/>
    <property type="evidence" value="ECO:0007669"/>
    <property type="project" value="InterPro"/>
</dbReference>
<dbReference type="GO" id="GO:0044209">
    <property type="term" value="P:AMP salvage"/>
    <property type="evidence" value="ECO:0007669"/>
    <property type="project" value="UniProtKB-UniRule"/>
</dbReference>
<dbReference type="GO" id="GO:0006166">
    <property type="term" value="P:purine ribonucleoside salvage"/>
    <property type="evidence" value="ECO:0007669"/>
    <property type="project" value="UniProtKB-KW"/>
</dbReference>
<dbReference type="CDD" id="cd06223">
    <property type="entry name" value="PRTases_typeI"/>
    <property type="match status" value="1"/>
</dbReference>
<dbReference type="FunFam" id="3.40.50.2020:FF:000021">
    <property type="entry name" value="Adenine phosphoribosyltransferase"/>
    <property type="match status" value="1"/>
</dbReference>
<dbReference type="Gene3D" id="3.40.50.2020">
    <property type="match status" value="1"/>
</dbReference>
<dbReference type="HAMAP" id="MF_00004">
    <property type="entry name" value="Aden_phosphoribosyltr"/>
    <property type="match status" value="1"/>
</dbReference>
<dbReference type="InterPro" id="IPR005764">
    <property type="entry name" value="Ade_phspho_trans"/>
</dbReference>
<dbReference type="InterPro" id="IPR000836">
    <property type="entry name" value="PRibTrfase_dom"/>
</dbReference>
<dbReference type="InterPro" id="IPR029057">
    <property type="entry name" value="PRTase-like"/>
</dbReference>
<dbReference type="InterPro" id="IPR050054">
    <property type="entry name" value="UPRTase/APRTase"/>
</dbReference>
<dbReference type="NCBIfam" id="NF002634">
    <property type="entry name" value="PRK02304.1-3"/>
    <property type="match status" value="1"/>
</dbReference>
<dbReference type="NCBIfam" id="NF002636">
    <property type="entry name" value="PRK02304.1-5"/>
    <property type="match status" value="1"/>
</dbReference>
<dbReference type="PANTHER" id="PTHR32315">
    <property type="entry name" value="ADENINE PHOSPHORIBOSYLTRANSFERASE"/>
    <property type="match status" value="1"/>
</dbReference>
<dbReference type="PANTHER" id="PTHR32315:SF3">
    <property type="entry name" value="ADENINE PHOSPHORIBOSYLTRANSFERASE"/>
    <property type="match status" value="1"/>
</dbReference>
<dbReference type="Pfam" id="PF00156">
    <property type="entry name" value="Pribosyltran"/>
    <property type="match status" value="1"/>
</dbReference>
<dbReference type="SUPFAM" id="SSF53271">
    <property type="entry name" value="PRTase-like"/>
    <property type="match status" value="1"/>
</dbReference>
<dbReference type="PROSITE" id="PS00103">
    <property type="entry name" value="PUR_PYR_PR_TRANSFER"/>
    <property type="match status" value="1"/>
</dbReference>
<accession>A6WCH4</accession>
<feature type="chain" id="PRO_0000329349" description="Adenine phosphoribosyltransferase">
    <location>
        <begin position="1"/>
        <end position="185"/>
    </location>
</feature>
<reference key="1">
    <citation type="journal article" date="2008" name="PLoS ONE">
        <title>Survival in nuclear waste, extreme resistance, and potential applications gleaned from the genome sequence of Kineococcus radiotolerans SRS30216.</title>
        <authorList>
            <person name="Bagwell C.E."/>
            <person name="Bhat S."/>
            <person name="Hawkins G.M."/>
            <person name="Smith B.W."/>
            <person name="Biswas T."/>
            <person name="Hoover T.R."/>
            <person name="Saunders E."/>
            <person name="Han C.S."/>
            <person name="Tsodikov O.V."/>
            <person name="Shimkets L.J."/>
        </authorList>
    </citation>
    <scope>NUCLEOTIDE SEQUENCE [LARGE SCALE GENOMIC DNA]</scope>
    <source>
        <strain>ATCC BAA-149 / DSM 14245 / SRS30216</strain>
    </source>
</reference>
<evidence type="ECO:0000255" key="1">
    <source>
        <dbReference type="HAMAP-Rule" id="MF_00004"/>
    </source>
</evidence>
<gene>
    <name evidence="1" type="primary">apt</name>
    <name type="ordered locus">Krad_3049</name>
</gene>
<organism>
    <name type="scientific">Kineococcus radiotolerans (strain ATCC BAA-149 / DSM 14245 / SRS30216)</name>
    <dbReference type="NCBI Taxonomy" id="266940"/>
    <lineage>
        <taxon>Bacteria</taxon>
        <taxon>Bacillati</taxon>
        <taxon>Actinomycetota</taxon>
        <taxon>Actinomycetes</taxon>
        <taxon>Kineosporiales</taxon>
        <taxon>Kineosporiaceae</taxon>
        <taxon>Kineococcus</taxon>
    </lineage>
</organism>
<protein>
    <recommendedName>
        <fullName evidence="1">Adenine phosphoribosyltransferase</fullName>
        <shortName evidence="1">APRT</shortName>
        <ecNumber evidence="1">2.4.2.7</ecNumber>
    </recommendedName>
</protein>
<proteinExistence type="inferred from homology"/>
<name>APT_KINRD</name>
<sequence>MSDLLVVPDAERVAATVVAGFRDVVDFPQPGVVFKDITPLLADARAFATVVEALAALARASGASAVAGIEARGFMLAAPAAERAGLGFWPVRKAGKLPAPVLRREYALEYGTAALELSAGTVGAGERVLVVDDVLATGGTARAACELLEEAGAQVVALAVLLELAPLGGRPRLGDRPVVALHTQT</sequence>
<comment type="function">
    <text evidence="1">Catalyzes a salvage reaction resulting in the formation of AMP, that is energically less costly than de novo synthesis.</text>
</comment>
<comment type="catalytic activity">
    <reaction evidence="1">
        <text>AMP + diphosphate = 5-phospho-alpha-D-ribose 1-diphosphate + adenine</text>
        <dbReference type="Rhea" id="RHEA:16609"/>
        <dbReference type="ChEBI" id="CHEBI:16708"/>
        <dbReference type="ChEBI" id="CHEBI:33019"/>
        <dbReference type="ChEBI" id="CHEBI:58017"/>
        <dbReference type="ChEBI" id="CHEBI:456215"/>
        <dbReference type="EC" id="2.4.2.7"/>
    </reaction>
</comment>
<comment type="pathway">
    <text evidence="1">Purine metabolism; AMP biosynthesis via salvage pathway; AMP from adenine: step 1/1.</text>
</comment>
<comment type="subunit">
    <text evidence="1">Homodimer.</text>
</comment>
<comment type="subcellular location">
    <subcellularLocation>
        <location evidence="1">Cytoplasm</location>
    </subcellularLocation>
</comment>
<comment type="similarity">
    <text evidence="1">Belongs to the purine/pyrimidine phosphoribosyltransferase family.</text>
</comment>
<keyword id="KW-0963">Cytoplasm</keyword>
<keyword id="KW-0328">Glycosyltransferase</keyword>
<keyword id="KW-0660">Purine salvage</keyword>
<keyword id="KW-1185">Reference proteome</keyword>
<keyword id="KW-0808">Transferase</keyword>